<gene>
    <name type="primary">pdhC</name>
    <name type="ordered locus">SAS1030</name>
</gene>
<organism>
    <name type="scientific">Staphylococcus aureus (strain MSSA476)</name>
    <dbReference type="NCBI Taxonomy" id="282459"/>
    <lineage>
        <taxon>Bacteria</taxon>
        <taxon>Bacillati</taxon>
        <taxon>Bacillota</taxon>
        <taxon>Bacilli</taxon>
        <taxon>Bacillales</taxon>
        <taxon>Staphylococcaceae</taxon>
        <taxon>Staphylococcus</taxon>
    </lineage>
</organism>
<comment type="function">
    <text>The pyruvate dehydrogenase complex catalyzes the overall conversion of pyruvate to acetyl-CoA and CO(2). It contains multiple copies of three enzymatic components: pyruvate dehydrogenase (E1), dihydrolipoamide acetyltransferase (E2) and lipoamide dehydrogenase (E3).</text>
</comment>
<comment type="catalytic activity">
    <reaction>
        <text>N(6)-[(R)-dihydrolipoyl]-L-lysyl-[protein] + acetyl-CoA = N(6)-[(R)-S(8)-acetyldihydrolipoyl]-L-lysyl-[protein] + CoA</text>
        <dbReference type="Rhea" id="RHEA:17017"/>
        <dbReference type="Rhea" id="RHEA-COMP:10475"/>
        <dbReference type="Rhea" id="RHEA-COMP:10478"/>
        <dbReference type="ChEBI" id="CHEBI:57287"/>
        <dbReference type="ChEBI" id="CHEBI:57288"/>
        <dbReference type="ChEBI" id="CHEBI:83100"/>
        <dbReference type="ChEBI" id="CHEBI:83111"/>
        <dbReference type="EC" id="2.3.1.12"/>
    </reaction>
</comment>
<comment type="cofactor">
    <cofactor evidence="1">
        <name>(R)-lipoate</name>
        <dbReference type="ChEBI" id="CHEBI:83088"/>
    </cofactor>
    <text evidence="1">Binds 1 lipoyl cofactor covalently.</text>
</comment>
<comment type="subunit">
    <text evidence="1">Forms a 24-polypeptide structural core with octahedral symmetry.</text>
</comment>
<comment type="similarity">
    <text evidence="6">Belongs to the 2-oxoacid dehydrogenase family.</text>
</comment>
<sequence>MAFEFRLPDIGEGIHEGEIVKWFVKAGDTIEEDDVLAEVQNDKSVVEIPSPVSGTVEEVMVEEGTVAVVGDVIVKIDAPDAEDMQFKGHDDDSSSKEEPAKEEAPAEQAPVATQTEEVDENRTVKAMPSVRKYAREKGVNIKAVSGSGKNGRITKEDVDAYLNGGAPTASNESAASATSEEVAETPAAPAAVTLEGDFPETTEKIPAMRRAIAKAMVNSKHTAPHVTLMDEIDVQALWDHRKKFKEIAAEQGTKLTFLPYVVKALVSALKKYPALNTSFNEEAGEIVHKHYWNIGIAADTDRGLLVPVVKHADRKSIFQISDEINELAVKARDGKLTADEMKGATCTISNIGSAGGQWFTPVINHPEVAILGIGRIAQKPIVKDGEIVAAPVLALSLSFDHRQIDGATGQNAMNHIKRLLNNPELLLMEG</sequence>
<name>ODP2_STAAS</name>
<accession>Q6GAB9</accession>
<proteinExistence type="inferred from homology"/>
<protein>
    <recommendedName>
        <fullName>Dihydrolipoyllysine-residue acetyltransferase component of pyruvate dehydrogenase complex</fullName>
        <ecNumber>2.3.1.12</ecNumber>
    </recommendedName>
    <alternativeName>
        <fullName>Dihydrolipoamide acetyltransferase component of pyruvate dehydrogenase complex</fullName>
    </alternativeName>
    <alternativeName>
        <fullName>E2</fullName>
    </alternativeName>
</protein>
<evidence type="ECO:0000250" key="1"/>
<evidence type="ECO:0000255" key="2"/>
<evidence type="ECO:0000255" key="3">
    <source>
        <dbReference type="PROSITE-ProRule" id="PRU01066"/>
    </source>
</evidence>
<evidence type="ECO:0000255" key="4">
    <source>
        <dbReference type="PROSITE-ProRule" id="PRU01170"/>
    </source>
</evidence>
<evidence type="ECO:0000256" key="5">
    <source>
        <dbReference type="SAM" id="MobiDB-lite"/>
    </source>
</evidence>
<evidence type="ECO:0000305" key="6"/>
<reference key="1">
    <citation type="journal article" date="2004" name="Proc. Natl. Acad. Sci. U.S.A.">
        <title>Complete genomes of two clinical Staphylococcus aureus strains: evidence for the rapid evolution of virulence and drug resistance.</title>
        <authorList>
            <person name="Holden M.T.G."/>
            <person name="Feil E.J."/>
            <person name="Lindsay J.A."/>
            <person name="Peacock S.J."/>
            <person name="Day N.P.J."/>
            <person name="Enright M.C."/>
            <person name="Foster T.J."/>
            <person name="Moore C.E."/>
            <person name="Hurst L."/>
            <person name="Atkin R."/>
            <person name="Barron A."/>
            <person name="Bason N."/>
            <person name="Bentley S.D."/>
            <person name="Chillingworth C."/>
            <person name="Chillingworth T."/>
            <person name="Churcher C."/>
            <person name="Clark L."/>
            <person name="Corton C."/>
            <person name="Cronin A."/>
            <person name="Doggett J."/>
            <person name="Dowd L."/>
            <person name="Feltwell T."/>
            <person name="Hance Z."/>
            <person name="Harris B."/>
            <person name="Hauser H."/>
            <person name="Holroyd S."/>
            <person name="Jagels K."/>
            <person name="James K.D."/>
            <person name="Lennard N."/>
            <person name="Line A."/>
            <person name="Mayes R."/>
            <person name="Moule S."/>
            <person name="Mungall K."/>
            <person name="Ormond D."/>
            <person name="Quail M.A."/>
            <person name="Rabbinowitsch E."/>
            <person name="Rutherford K.M."/>
            <person name="Sanders M."/>
            <person name="Sharp S."/>
            <person name="Simmonds M."/>
            <person name="Stevens K."/>
            <person name="Whitehead S."/>
            <person name="Barrell B.G."/>
            <person name="Spratt B.G."/>
            <person name="Parkhill J."/>
        </authorList>
    </citation>
    <scope>NUCLEOTIDE SEQUENCE [LARGE SCALE GENOMIC DNA]</scope>
    <source>
        <strain>MSSA476</strain>
    </source>
</reference>
<feature type="chain" id="PRO_0000162291" description="Dihydrolipoyllysine-residue acetyltransferase component of pyruvate dehydrogenase complex">
    <location>
        <begin position="1"/>
        <end position="430"/>
    </location>
</feature>
<feature type="domain" description="Lipoyl-binding" evidence="3">
    <location>
        <begin position="2"/>
        <end position="77"/>
    </location>
</feature>
<feature type="domain" description="Peripheral subunit-binding (PSBD)" evidence="4">
    <location>
        <begin position="125"/>
        <end position="162"/>
    </location>
</feature>
<feature type="region of interest" description="Disordered" evidence="5">
    <location>
        <begin position="80"/>
        <end position="122"/>
    </location>
</feature>
<feature type="region of interest" description="Disordered" evidence="5">
    <location>
        <begin position="165"/>
        <end position="200"/>
    </location>
</feature>
<feature type="compositionally biased region" description="Basic and acidic residues" evidence="5">
    <location>
        <begin position="84"/>
        <end position="104"/>
    </location>
</feature>
<feature type="compositionally biased region" description="Low complexity" evidence="5">
    <location>
        <begin position="166"/>
        <end position="193"/>
    </location>
</feature>
<feature type="active site" evidence="2">
    <location>
        <position position="401"/>
    </location>
</feature>
<feature type="modified residue" description="N6-lipoyllysine" evidence="1 3">
    <location>
        <position position="43"/>
    </location>
</feature>
<keyword id="KW-0012">Acyltransferase</keyword>
<keyword id="KW-0450">Lipoyl</keyword>
<keyword id="KW-0808">Transferase</keyword>
<dbReference type="EC" id="2.3.1.12"/>
<dbReference type="EMBL" id="BX571857">
    <property type="protein sequence ID" value="CAG42804.1"/>
    <property type="molecule type" value="Genomic_DNA"/>
</dbReference>
<dbReference type="RefSeq" id="WP_000863440.1">
    <property type="nucleotide sequence ID" value="NC_002953.3"/>
</dbReference>
<dbReference type="SMR" id="Q6GAB9"/>
<dbReference type="KEGG" id="sas:SAS1030"/>
<dbReference type="HOGENOM" id="CLU_016733_10_0_9"/>
<dbReference type="GO" id="GO:0005737">
    <property type="term" value="C:cytoplasm"/>
    <property type="evidence" value="ECO:0007669"/>
    <property type="project" value="TreeGrafter"/>
</dbReference>
<dbReference type="GO" id="GO:0004742">
    <property type="term" value="F:dihydrolipoyllysine-residue acetyltransferase activity"/>
    <property type="evidence" value="ECO:0007669"/>
    <property type="project" value="UniProtKB-EC"/>
</dbReference>
<dbReference type="GO" id="GO:0031405">
    <property type="term" value="F:lipoic acid binding"/>
    <property type="evidence" value="ECO:0007669"/>
    <property type="project" value="TreeGrafter"/>
</dbReference>
<dbReference type="CDD" id="cd06849">
    <property type="entry name" value="lipoyl_domain"/>
    <property type="match status" value="1"/>
</dbReference>
<dbReference type="FunFam" id="3.30.559.10:FF:000007">
    <property type="entry name" value="Dihydrolipoamide acetyltransferase component of pyruvate dehydrogenase complex"/>
    <property type="match status" value="1"/>
</dbReference>
<dbReference type="FunFam" id="4.10.320.10:FF:000011">
    <property type="entry name" value="Dihydrolipoamide acetyltransferase component of pyruvate dehydrogenase complex"/>
    <property type="match status" value="1"/>
</dbReference>
<dbReference type="Gene3D" id="2.40.50.100">
    <property type="match status" value="1"/>
</dbReference>
<dbReference type="Gene3D" id="3.30.559.10">
    <property type="entry name" value="Chloramphenicol acetyltransferase-like domain"/>
    <property type="match status" value="1"/>
</dbReference>
<dbReference type="Gene3D" id="4.10.320.10">
    <property type="entry name" value="E3-binding domain"/>
    <property type="match status" value="1"/>
</dbReference>
<dbReference type="InterPro" id="IPR003016">
    <property type="entry name" value="2-oxoA_DH_lipoyl-BS"/>
</dbReference>
<dbReference type="InterPro" id="IPR001078">
    <property type="entry name" value="2-oxoacid_DH_actylTfrase"/>
</dbReference>
<dbReference type="InterPro" id="IPR050743">
    <property type="entry name" value="2-oxoacid_DH_E2_comp"/>
</dbReference>
<dbReference type="InterPro" id="IPR000089">
    <property type="entry name" value="Biotin_lipoyl"/>
</dbReference>
<dbReference type="InterPro" id="IPR023213">
    <property type="entry name" value="CAT-like_dom_sf"/>
</dbReference>
<dbReference type="InterPro" id="IPR036625">
    <property type="entry name" value="E3-bd_dom_sf"/>
</dbReference>
<dbReference type="InterPro" id="IPR004167">
    <property type="entry name" value="PSBD"/>
</dbReference>
<dbReference type="InterPro" id="IPR011053">
    <property type="entry name" value="Single_hybrid_motif"/>
</dbReference>
<dbReference type="PANTHER" id="PTHR43178">
    <property type="entry name" value="DIHYDROLIPOAMIDE ACETYLTRANSFERASE COMPONENT OF PYRUVATE DEHYDROGENASE COMPLEX"/>
    <property type="match status" value="1"/>
</dbReference>
<dbReference type="PANTHER" id="PTHR43178:SF5">
    <property type="entry name" value="LIPOAMIDE ACYLTRANSFERASE COMPONENT OF BRANCHED-CHAIN ALPHA-KETO ACID DEHYDROGENASE COMPLEX, MITOCHONDRIAL"/>
    <property type="match status" value="1"/>
</dbReference>
<dbReference type="Pfam" id="PF00198">
    <property type="entry name" value="2-oxoacid_dh"/>
    <property type="match status" value="1"/>
</dbReference>
<dbReference type="Pfam" id="PF00364">
    <property type="entry name" value="Biotin_lipoyl"/>
    <property type="match status" value="1"/>
</dbReference>
<dbReference type="Pfam" id="PF02817">
    <property type="entry name" value="E3_binding"/>
    <property type="match status" value="1"/>
</dbReference>
<dbReference type="SUPFAM" id="SSF52777">
    <property type="entry name" value="CoA-dependent acyltransferases"/>
    <property type="match status" value="1"/>
</dbReference>
<dbReference type="SUPFAM" id="SSF47005">
    <property type="entry name" value="Peripheral subunit-binding domain of 2-oxo acid dehydrogenase complex"/>
    <property type="match status" value="1"/>
</dbReference>
<dbReference type="SUPFAM" id="SSF51230">
    <property type="entry name" value="Single hybrid motif"/>
    <property type="match status" value="1"/>
</dbReference>
<dbReference type="PROSITE" id="PS50968">
    <property type="entry name" value="BIOTINYL_LIPOYL"/>
    <property type="match status" value="1"/>
</dbReference>
<dbReference type="PROSITE" id="PS00189">
    <property type="entry name" value="LIPOYL"/>
    <property type="match status" value="1"/>
</dbReference>
<dbReference type="PROSITE" id="PS51826">
    <property type="entry name" value="PSBD"/>
    <property type="match status" value="1"/>
</dbReference>